<name>SPEE_SHEON</name>
<feature type="chain" id="PRO_0000156505" description="Polyamine aminopropyltransferase">
    <location>
        <begin position="1"/>
        <end position="574"/>
    </location>
</feature>
<feature type="transmembrane region" description="Helical" evidence="1">
    <location>
        <begin position="22"/>
        <end position="42"/>
    </location>
</feature>
<feature type="transmembrane region" description="Helical" evidence="1">
    <location>
        <begin position="55"/>
        <end position="75"/>
    </location>
</feature>
<feature type="transmembrane region" description="Helical" evidence="1">
    <location>
        <begin position="90"/>
        <end position="110"/>
    </location>
</feature>
<feature type="transmembrane region" description="Helical" evidence="1">
    <location>
        <begin position="144"/>
        <end position="164"/>
    </location>
</feature>
<feature type="transmembrane region" description="Helical" evidence="1">
    <location>
        <begin position="188"/>
        <end position="208"/>
    </location>
</feature>
<feature type="transmembrane region" description="Helical" evidence="1">
    <location>
        <begin position="209"/>
        <end position="229"/>
    </location>
</feature>
<feature type="transmembrane region" description="Helical" evidence="1">
    <location>
        <begin position="237"/>
        <end position="257"/>
    </location>
</feature>
<feature type="domain" description="PABS" evidence="1">
    <location>
        <begin position="257"/>
        <end position="505"/>
    </location>
</feature>
<feature type="region of interest" description="Spermidine synthase">
    <location>
        <begin position="254"/>
        <end position="510"/>
    </location>
</feature>
<feature type="active site" description="Proton acceptor" evidence="1">
    <location>
        <position position="424"/>
    </location>
</feature>
<feature type="binding site" evidence="1">
    <location>
        <position position="281"/>
    </location>
    <ligand>
        <name>S-methyl-5'-thioadenosine</name>
        <dbReference type="ChEBI" id="CHEBI:17509"/>
    </ligand>
</feature>
<feature type="binding site" evidence="1">
    <location>
        <position position="317"/>
    </location>
    <ligand>
        <name>spermidine</name>
        <dbReference type="ChEBI" id="CHEBI:57834"/>
    </ligand>
</feature>
<feature type="binding site" evidence="1">
    <location>
        <position position="341"/>
    </location>
    <ligand>
        <name>spermidine</name>
        <dbReference type="ChEBI" id="CHEBI:57834"/>
    </ligand>
</feature>
<feature type="binding site" evidence="1">
    <location>
        <position position="360"/>
    </location>
    <ligand>
        <name>S-methyl-5'-thioadenosine</name>
        <dbReference type="ChEBI" id="CHEBI:17509"/>
    </ligand>
</feature>
<feature type="binding site" evidence="1">
    <location>
        <begin position="403"/>
        <end position="404"/>
    </location>
    <ligand>
        <name>S-methyl-5'-thioadenosine</name>
        <dbReference type="ChEBI" id="CHEBI:17509"/>
    </ligand>
</feature>
<reference key="1">
    <citation type="journal article" date="2002" name="Nat. Biotechnol.">
        <title>Genome sequence of the dissimilatory metal ion-reducing bacterium Shewanella oneidensis.</title>
        <authorList>
            <person name="Heidelberg J.F."/>
            <person name="Paulsen I.T."/>
            <person name="Nelson K.E."/>
            <person name="Gaidos E.J."/>
            <person name="Nelson W.C."/>
            <person name="Read T.D."/>
            <person name="Eisen J.A."/>
            <person name="Seshadri R."/>
            <person name="Ward N.L."/>
            <person name="Methe B.A."/>
            <person name="Clayton R.A."/>
            <person name="Meyer T."/>
            <person name="Tsapin A."/>
            <person name="Scott J."/>
            <person name="Beanan M.J."/>
            <person name="Brinkac L.M."/>
            <person name="Daugherty S.C."/>
            <person name="DeBoy R.T."/>
            <person name="Dodson R.J."/>
            <person name="Durkin A.S."/>
            <person name="Haft D.H."/>
            <person name="Kolonay J.F."/>
            <person name="Madupu R."/>
            <person name="Peterson J.D."/>
            <person name="Umayam L.A."/>
            <person name="White O."/>
            <person name="Wolf A.M."/>
            <person name="Vamathevan J.J."/>
            <person name="Weidman J.F."/>
            <person name="Impraim M."/>
            <person name="Lee K."/>
            <person name="Berry K.J."/>
            <person name="Lee C."/>
            <person name="Mueller J."/>
            <person name="Khouri H.M."/>
            <person name="Gill J."/>
            <person name="Utterback T.R."/>
            <person name="McDonald L.A."/>
            <person name="Feldblyum T.V."/>
            <person name="Smith H.O."/>
            <person name="Venter J.C."/>
            <person name="Nealson K.H."/>
            <person name="Fraser C.M."/>
        </authorList>
    </citation>
    <scope>NUCLEOTIDE SEQUENCE [LARGE SCALE GENOMIC DNA]</scope>
    <source>
        <strain>ATCC 700550 / JCM 31522 / CIP 106686 / LMG 19005 / NCIMB 14063 / MR-1</strain>
    </source>
</reference>
<accession>Q8EAX8</accession>
<evidence type="ECO:0000255" key="1">
    <source>
        <dbReference type="HAMAP-Rule" id="MF_00198"/>
    </source>
</evidence>
<dbReference type="EC" id="2.5.1.16" evidence="1"/>
<dbReference type="EMBL" id="AE014299">
    <property type="protein sequence ID" value="AAN56744.1"/>
    <property type="molecule type" value="Genomic_DNA"/>
</dbReference>
<dbReference type="RefSeq" id="NP_719300.1">
    <property type="nucleotide sequence ID" value="NC_004347.2"/>
</dbReference>
<dbReference type="RefSeq" id="WP_011073540.1">
    <property type="nucleotide sequence ID" value="NC_004347.2"/>
</dbReference>
<dbReference type="SMR" id="Q8EAX8"/>
<dbReference type="STRING" id="211586.SO_3763"/>
<dbReference type="PaxDb" id="211586-SO_3763"/>
<dbReference type="KEGG" id="son:SO_3763"/>
<dbReference type="PATRIC" id="fig|211586.12.peg.3648"/>
<dbReference type="eggNOG" id="COG4262">
    <property type="taxonomic scope" value="Bacteria"/>
</dbReference>
<dbReference type="HOGENOM" id="CLU_034289_1_0_6"/>
<dbReference type="OrthoDB" id="9793120at2"/>
<dbReference type="PhylomeDB" id="Q8EAX8"/>
<dbReference type="BioCyc" id="SONE211586:G1GMP-3495-MONOMER"/>
<dbReference type="UniPathway" id="UPA00248">
    <property type="reaction ID" value="UER00314"/>
</dbReference>
<dbReference type="Proteomes" id="UP000008186">
    <property type="component" value="Chromosome"/>
</dbReference>
<dbReference type="GO" id="GO:0005886">
    <property type="term" value="C:plasma membrane"/>
    <property type="evidence" value="ECO:0007669"/>
    <property type="project" value="UniProtKB-SubCell"/>
</dbReference>
<dbReference type="GO" id="GO:0004766">
    <property type="term" value="F:spermidine synthase activity"/>
    <property type="evidence" value="ECO:0007669"/>
    <property type="project" value="UniProtKB-UniRule"/>
</dbReference>
<dbReference type="GO" id="GO:0006596">
    <property type="term" value="P:polyamine biosynthetic process"/>
    <property type="evidence" value="ECO:0000318"/>
    <property type="project" value="GO_Central"/>
</dbReference>
<dbReference type="GO" id="GO:0008295">
    <property type="term" value="P:spermidine biosynthetic process"/>
    <property type="evidence" value="ECO:0007669"/>
    <property type="project" value="UniProtKB-UniRule"/>
</dbReference>
<dbReference type="FunFam" id="3.40.50.150:FF:000088">
    <property type="entry name" value="Polyamine aminopropyltransferase"/>
    <property type="match status" value="1"/>
</dbReference>
<dbReference type="Gene3D" id="3.40.50.150">
    <property type="entry name" value="Vaccinia Virus protein VP39"/>
    <property type="match status" value="1"/>
</dbReference>
<dbReference type="HAMAP" id="MF_00198">
    <property type="entry name" value="Spermidine_synth"/>
    <property type="match status" value="1"/>
</dbReference>
<dbReference type="InterPro" id="IPR030374">
    <property type="entry name" value="PABS"/>
</dbReference>
<dbReference type="InterPro" id="IPR029063">
    <property type="entry name" value="SAM-dependent_MTases_sf"/>
</dbReference>
<dbReference type="InterPro" id="IPR001045">
    <property type="entry name" value="Spermi_synthase"/>
</dbReference>
<dbReference type="NCBIfam" id="NF002956">
    <property type="entry name" value="PRK03612.1"/>
    <property type="match status" value="1"/>
</dbReference>
<dbReference type="PANTHER" id="PTHR43317:SF11">
    <property type="entry name" value="POLYAMINE AMINOPROPYLTRANSFERASE 2"/>
    <property type="match status" value="1"/>
</dbReference>
<dbReference type="PANTHER" id="PTHR43317">
    <property type="entry name" value="THERMOSPERMINE SYNTHASE ACAULIS5"/>
    <property type="match status" value="1"/>
</dbReference>
<dbReference type="Pfam" id="PF01564">
    <property type="entry name" value="Spermine_synth"/>
    <property type="match status" value="1"/>
</dbReference>
<dbReference type="SUPFAM" id="SSF53335">
    <property type="entry name" value="S-adenosyl-L-methionine-dependent methyltransferases"/>
    <property type="match status" value="1"/>
</dbReference>
<dbReference type="PROSITE" id="PS51006">
    <property type="entry name" value="PABS_2"/>
    <property type="match status" value="1"/>
</dbReference>
<proteinExistence type="inferred from homology"/>
<keyword id="KW-1003">Cell membrane</keyword>
<keyword id="KW-0472">Membrane</keyword>
<keyword id="KW-0620">Polyamine biosynthesis</keyword>
<keyword id="KW-1185">Reference proteome</keyword>
<keyword id="KW-0745">Spermidine biosynthesis</keyword>
<keyword id="KW-0808">Transferase</keyword>
<keyword id="KW-0812">Transmembrane</keyword>
<keyword id="KW-1133">Transmembrane helix</keyword>
<sequence length="574" mass="63124">MHESQLTTSAAKPSRLGWFDDVLLLGIMAVLAGCGLIYEYLLSHYAGRILGALEAAIYTMIGLMIVSMGLGAFAARKIKDAFTGFVVLELTVALCGSLAILITAAVIGFGQQLPMLIASTLGLPPDQLPEGGMIGTLQKLSEYLPYFWGVLLGLMIGMEIPLIARVRQSLSDEHLLHNAGTIYGADYIGAGIGAAIWVGFMLAIDIQLAAALTASFNLLAGFVFIWRFWQKIQRPKLLLAAHLVVTGVLLLLAIQGPSWEQQFNNLLYKDKVVYAKATRFQQLTFTERLRGNGLSPVYALYINGRLQFSSSDEHIYHAFLVHPTLAASARHNKVLIIGGGDGLGLKQVLRWEPEQVTLLDLDAALVQLFKSPDPDMPERLSQALLSLNGNAFNDPRVTVIHDDAFNGVDKLIAKGDKYDAIIVDLPDPSHPDLNKLYSDYFYRKLKELISNDGALTVQSTSPYHAQKAFISVAKTLALAGFDVKQYHHNVPSFGEWGWSIATLDGKDAQHRLAQLTKLPIADDWLTLGLVKGAFEFPANFYQDATNIKPNELGSLQLYHYHQQAWSETQGLDLF</sequence>
<comment type="function">
    <text evidence="1">Catalyzes the irreversible transfer of a propylamine group from the amino donor S-adenosylmethioninamine (decarboxy-AdoMet) to putrescine (1,4-diaminobutane) to yield spermidine.</text>
</comment>
<comment type="catalytic activity">
    <reaction evidence="1">
        <text>S-adenosyl 3-(methylsulfanyl)propylamine + putrescine = S-methyl-5'-thioadenosine + spermidine + H(+)</text>
        <dbReference type="Rhea" id="RHEA:12721"/>
        <dbReference type="ChEBI" id="CHEBI:15378"/>
        <dbReference type="ChEBI" id="CHEBI:17509"/>
        <dbReference type="ChEBI" id="CHEBI:57443"/>
        <dbReference type="ChEBI" id="CHEBI:57834"/>
        <dbReference type="ChEBI" id="CHEBI:326268"/>
        <dbReference type="EC" id="2.5.1.16"/>
    </reaction>
</comment>
<comment type="pathway">
    <text evidence="1">Amine and polyamine biosynthesis; spermidine biosynthesis; spermidine from putrescine: step 1/1.</text>
</comment>
<comment type="subunit">
    <text evidence="1">Homodimer or homotetramer.</text>
</comment>
<comment type="subcellular location">
    <subcellularLocation>
        <location evidence="1">Cell membrane</location>
        <topology evidence="1">Multi-pass membrane protein</topology>
    </subcellularLocation>
</comment>
<comment type="similarity">
    <text evidence="1">Belongs to the spermidine/spermine synthase family.</text>
</comment>
<protein>
    <recommendedName>
        <fullName evidence="1">Polyamine aminopropyltransferase</fullName>
    </recommendedName>
    <alternativeName>
        <fullName evidence="1">Putrescine aminopropyltransferase</fullName>
        <shortName evidence="1">PAPT</shortName>
    </alternativeName>
    <alternativeName>
        <fullName evidence="1">Spermidine synthase</fullName>
        <shortName evidence="1">SPDS</shortName>
        <shortName evidence="1">SPDSY</shortName>
        <ecNumber evidence="1">2.5.1.16</ecNumber>
    </alternativeName>
</protein>
<organism>
    <name type="scientific">Shewanella oneidensis (strain ATCC 700550 / JCM 31522 / CIP 106686 / LMG 19005 / NCIMB 14063 / MR-1)</name>
    <dbReference type="NCBI Taxonomy" id="211586"/>
    <lineage>
        <taxon>Bacteria</taxon>
        <taxon>Pseudomonadati</taxon>
        <taxon>Pseudomonadota</taxon>
        <taxon>Gammaproteobacteria</taxon>
        <taxon>Alteromonadales</taxon>
        <taxon>Shewanellaceae</taxon>
        <taxon>Shewanella</taxon>
    </lineage>
</organism>
<gene>
    <name evidence="1" type="primary">speE</name>
    <name type="ordered locus">SO_3763</name>
</gene>